<sequence length="143" mass="16608">MFMGEYQHNIDIKGRLIVPAKFRELLGDNFVITRGLDKCLFAYPQEEWKKLEEKLQTLPLTKKDARSFTRFFFSGASECELDKQGRINIPSNLLQYADLEKETVIIGVSSRIEIWSKSEWDDVFNEAEESFADLAENMIGFDI</sequence>
<proteinExistence type="inferred from homology"/>
<dbReference type="EMBL" id="CP001175">
    <property type="protein sequence ID" value="ACK38875.1"/>
    <property type="molecule type" value="Genomic_DNA"/>
</dbReference>
<dbReference type="RefSeq" id="WP_003723756.1">
    <property type="nucleotide sequence ID" value="NC_011660.1"/>
</dbReference>
<dbReference type="SMR" id="B8DH87"/>
<dbReference type="GeneID" id="93239939"/>
<dbReference type="KEGG" id="lmh:LMHCC_0518"/>
<dbReference type="HOGENOM" id="CLU_107907_0_5_9"/>
<dbReference type="GO" id="GO:0005737">
    <property type="term" value="C:cytoplasm"/>
    <property type="evidence" value="ECO:0007669"/>
    <property type="project" value="UniProtKB-UniRule"/>
</dbReference>
<dbReference type="GO" id="GO:0009295">
    <property type="term" value="C:nucleoid"/>
    <property type="evidence" value="ECO:0007669"/>
    <property type="project" value="UniProtKB-SubCell"/>
</dbReference>
<dbReference type="GO" id="GO:0003700">
    <property type="term" value="F:DNA-binding transcription factor activity"/>
    <property type="evidence" value="ECO:0007669"/>
    <property type="project" value="UniProtKB-UniRule"/>
</dbReference>
<dbReference type="GO" id="GO:0000976">
    <property type="term" value="F:transcription cis-regulatory region binding"/>
    <property type="evidence" value="ECO:0007669"/>
    <property type="project" value="TreeGrafter"/>
</dbReference>
<dbReference type="GO" id="GO:2000143">
    <property type="term" value="P:negative regulation of DNA-templated transcription initiation"/>
    <property type="evidence" value="ECO:0007669"/>
    <property type="project" value="TreeGrafter"/>
</dbReference>
<dbReference type="CDD" id="cd16321">
    <property type="entry name" value="MraZ_C"/>
    <property type="match status" value="1"/>
</dbReference>
<dbReference type="CDD" id="cd16320">
    <property type="entry name" value="MraZ_N"/>
    <property type="match status" value="1"/>
</dbReference>
<dbReference type="FunFam" id="3.40.1550.20:FF:000002">
    <property type="entry name" value="Transcriptional regulator MraZ"/>
    <property type="match status" value="1"/>
</dbReference>
<dbReference type="Gene3D" id="3.40.1550.20">
    <property type="entry name" value="Transcriptional regulator MraZ domain"/>
    <property type="match status" value="1"/>
</dbReference>
<dbReference type="HAMAP" id="MF_01008">
    <property type="entry name" value="MraZ"/>
    <property type="match status" value="1"/>
</dbReference>
<dbReference type="InterPro" id="IPR003444">
    <property type="entry name" value="MraZ"/>
</dbReference>
<dbReference type="InterPro" id="IPR035644">
    <property type="entry name" value="MraZ_C"/>
</dbReference>
<dbReference type="InterPro" id="IPR020603">
    <property type="entry name" value="MraZ_dom"/>
</dbReference>
<dbReference type="InterPro" id="IPR035642">
    <property type="entry name" value="MraZ_N"/>
</dbReference>
<dbReference type="InterPro" id="IPR038619">
    <property type="entry name" value="MraZ_sf"/>
</dbReference>
<dbReference type="InterPro" id="IPR007159">
    <property type="entry name" value="SpoVT-AbrB_dom"/>
</dbReference>
<dbReference type="InterPro" id="IPR037914">
    <property type="entry name" value="SpoVT-AbrB_sf"/>
</dbReference>
<dbReference type="NCBIfam" id="TIGR00242">
    <property type="entry name" value="division/cell wall cluster transcriptional repressor MraZ"/>
    <property type="match status" value="1"/>
</dbReference>
<dbReference type="PANTHER" id="PTHR34701">
    <property type="entry name" value="TRANSCRIPTIONAL REGULATOR MRAZ"/>
    <property type="match status" value="1"/>
</dbReference>
<dbReference type="PANTHER" id="PTHR34701:SF1">
    <property type="entry name" value="TRANSCRIPTIONAL REGULATOR MRAZ"/>
    <property type="match status" value="1"/>
</dbReference>
<dbReference type="Pfam" id="PF02381">
    <property type="entry name" value="MraZ"/>
    <property type="match status" value="2"/>
</dbReference>
<dbReference type="SUPFAM" id="SSF89447">
    <property type="entry name" value="AbrB/MazE/MraZ-like"/>
    <property type="match status" value="1"/>
</dbReference>
<dbReference type="PROSITE" id="PS51740">
    <property type="entry name" value="SPOVT_ABRB"/>
    <property type="match status" value="2"/>
</dbReference>
<reference key="1">
    <citation type="journal article" date="2011" name="J. Bacteriol.">
        <title>Genome sequence of lineage III Listeria monocytogenes strain HCC23.</title>
        <authorList>
            <person name="Steele C.L."/>
            <person name="Donaldson J.R."/>
            <person name="Paul D."/>
            <person name="Banes M.M."/>
            <person name="Arick T."/>
            <person name="Bridges S.M."/>
            <person name="Lawrence M.L."/>
        </authorList>
    </citation>
    <scope>NUCLEOTIDE SEQUENCE [LARGE SCALE GENOMIC DNA]</scope>
    <source>
        <strain>HCC23</strain>
    </source>
</reference>
<keyword id="KW-0963">Cytoplasm</keyword>
<keyword id="KW-0238">DNA-binding</keyword>
<keyword id="KW-0677">Repeat</keyword>
<keyword id="KW-0804">Transcription</keyword>
<keyword id="KW-0805">Transcription regulation</keyword>
<accession>B8DH87</accession>
<gene>
    <name evidence="1" type="primary">mraZ</name>
    <name type="ordered locus">LMHCC_0518</name>
</gene>
<feature type="chain" id="PRO_1000148860" description="Transcriptional regulator MraZ">
    <location>
        <begin position="1"/>
        <end position="143"/>
    </location>
</feature>
<feature type="domain" description="SpoVT-AbrB 1" evidence="2">
    <location>
        <begin position="5"/>
        <end position="47"/>
    </location>
</feature>
<feature type="domain" description="SpoVT-AbrB 2" evidence="2">
    <location>
        <begin position="76"/>
        <end position="119"/>
    </location>
</feature>
<organism>
    <name type="scientific">Listeria monocytogenes serotype 4a (strain HCC23)</name>
    <dbReference type="NCBI Taxonomy" id="552536"/>
    <lineage>
        <taxon>Bacteria</taxon>
        <taxon>Bacillati</taxon>
        <taxon>Bacillota</taxon>
        <taxon>Bacilli</taxon>
        <taxon>Bacillales</taxon>
        <taxon>Listeriaceae</taxon>
        <taxon>Listeria</taxon>
    </lineage>
</organism>
<comment type="subunit">
    <text evidence="1">Forms oligomers.</text>
</comment>
<comment type="subcellular location">
    <subcellularLocation>
        <location evidence="1">Cytoplasm</location>
        <location evidence="1">Nucleoid</location>
    </subcellularLocation>
</comment>
<comment type="similarity">
    <text evidence="1">Belongs to the MraZ family.</text>
</comment>
<name>MRAZ_LISMH</name>
<evidence type="ECO:0000255" key="1">
    <source>
        <dbReference type="HAMAP-Rule" id="MF_01008"/>
    </source>
</evidence>
<evidence type="ECO:0000255" key="2">
    <source>
        <dbReference type="PROSITE-ProRule" id="PRU01076"/>
    </source>
</evidence>
<protein>
    <recommendedName>
        <fullName>Transcriptional regulator MraZ</fullName>
    </recommendedName>
</protein>